<gene>
    <name type="primary">SNAPC5</name>
</gene>
<sequence>MLSRLQELRKEEETLLRLKAALHDQLNRLKVEELALQSMISSRREGEMLPSQPAPEPSHDMLVHVDNEASINQTALELSTRSHVQEEEEEEEEEEEDS</sequence>
<organism>
    <name type="scientific">Bos taurus</name>
    <name type="common">Bovine</name>
    <dbReference type="NCBI Taxonomy" id="9913"/>
    <lineage>
        <taxon>Eukaryota</taxon>
        <taxon>Metazoa</taxon>
        <taxon>Chordata</taxon>
        <taxon>Craniata</taxon>
        <taxon>Vertebrata</taxon>
        <taxon>Euteleostomi</taxon>
        <taxon>Mammalia</taxon>
        <taxon>Eutheria</taxon>
        <taxon>Laurasiatheria</taxon>
        <taxon>Artiodactyla</taxon>
        <taxon>Ruminantia</taxon>
        <taxon>Pecora</taxon>
        <taxon>Bovidae</taxon>
        <taxon>Bovinae</taxon>
        <taxon>Bos</taxon>
    </lineage>
</organism>
<evidence type="ECO:0000250" key="1"/>
<evidence type="ECO:0000256" key="2">
    <source>
        <dbReference type="SAM" id="MobiDB-lite"/>
    </source>
</evidence>
<dbReference type="EMBL" id="BC113222">
    <property type="protein sequence ID" value="AAI13223.1"/>
    <property type="molecule type" value="mRNA"/>
</dbReference>
<dbReference type="RefSeq" id="NP_001040038.1">
    <property type="nucleotide sequence ID" value="NM_001046573.1"/>
</dbReference>
<dbReference type="RefSeq" id="XP_059746635.1">
    <property type="nucleotide sequence ID" value="XM_059890652.1"/>
</dbReference>
<dbReference type="SMR" id="Q29S17"/>
<dbReference type="FunCoup" id="Q29S17">
    <property type="interactions" value="282"/>
</dbReference>
<dbReference type="STRING" id="9913.ENSBTAP00000006862"/>
<dbReference type="PaxDb" id="9913-ENSBTAP00000006862"/>
<dbReference type="Ensembl" id="ENSBTAT00000006862.4">
    <property type="protein sequence ID" value="ENSBTAP00000006862.3"/>
    <property type="gene ID" value="ENSBTAG00000005210.4"/>
</dbReference>
<dbReference type="GeneID" id="616058"/>
<dbReference type="KEGG" id="bta:616058"/>
<dbReference type="CTD" id="10302"/>
<dbReference type="VEuPathDB" id="HostDB:ENSBTAG00000005210"/>
<dbReference type="VGNC" id="VGNC:35057">
    <property type="gene designation" value="SNAPC5"/>
</dbReference>
<dbReference type="eggNOG" id="ENOG502S8MI">
    <property type="taxonomic scope" value="Eukaryota"/>
</dbReference>
<dbReference type="GeneTree" id="ENSGT00390000010331"/>
<dbReference type="HOGENOM" id="CLU_167684_0_0_1"/>
<dbReference type="InParanoid" id="Q29S17"/>
<dbReference type="OMA" id="EDPPNIM"/>
<dbReference type="OrthoDB" id="6158499at2759"/>
<dbReference type="TreeFam" id="TF328823"/>
<dbReference type="Reactome" id="R-BTA-6807505">
    <property type="pathway name" value="RNA polymerase II transcribes snRNA genes"/>
</dbReference>
<dbReference type="Reactome" id="R-BTA-76071">
    <property type="pathway name" value="RNA Polymerase III Transcription Initiation From Type 3 Promoter"/>
</dbReference>
<dbReference type="Proteomes" id="UP000009136">
    <property type="component" value="Chromosome 10"/>
</dbReference>
<dbReference type="Bgee" id="ENSBTAG00000005210">
    <property type="expression patterns" value="Expressed in occipital lobe and 108 other cell types or tissues"/>
</dbReference>
<dbReference type="GO" id="GO:0016604">
    <property type="term" value="C:nuclear body"/>
    <property type="evidence" value="ECO:0007669"/>
    <property type="project" value="Ensembl"/>
</dbReference>
<dbReference type="GO" id="GO:0005730">
    <property type="term" value="C:nucleolus"/>
    <property type="evidence" value="ECO:0007669"/>
    <property type="project" value="Ensembl"/>
</dbReference>
<dbReference type="GO" id="GO:0016251">
    <property type="term" value="F:RNA polymerase II general transcription initiation factor activity"/>
    <property type="evidence" value="ECO:0007669"/>
    <property type="project" value="Ensembl"/>
</dbReference>
<dbReference type="GO" id="GO:0000995">
    <property type="term" value="F:RNA polymerase III general transcription initiation factor activity"/>
    <property type="evidence" value="ECO:0007669"/>
    <property type="project" value="Ensembl"/>
</dbReference>
<dbReference type="GO" id="GO:0042795">
    <property type="term" value="P:snRNA transcription by RNA polymerase II"/>
    <property type="evidence" value="ECO:0007669"/>
    <property type="project" value="Ensembl"/>
</dbReference>
<dbReference type="GO" id="GO:0042796">
    <property type="term" value="P:snRNA transcription by RNA polymerase III"/>
    <property type="evidence" value="ECO:0007669"/>
    <property type="project" value="Ensembl"/>
</dbReference>
<dbReference type="GO" id="GO:0006384">
    <property type="term" value="P:transcription initiation at RNA polymerase III promoter"/>
    <property type="evidence" value="ECO:0007669"/>
    <property type="project" value="InterPro"/>
</dbReference>
<dbReference type="InterPro" id="IPR029138">
    <property type="entry name" value="SNAPC5"/>
</dbReference>
<dbReference type="PANTHER" id="PTHR15333">
    <property type="entry name" value="SNRNA-ACTIVATING PROTEIN COMPLEX SUBUNIT 5"/>
    <property type="match status" value="1"/>
</dbReference>
<dbReference type="PANTHER" id="PTHR15333:SF2">
    <property type="entry name" value="SNRNA-ACTIVATING PROTEIN COMPLEX SUBUNIT 5"/>
    <property type="match status" value="1"/>
</dbReference>
<dbReference type="Pfam" id="PF15497">
    <property type="entry name" value="SNAPC5"/>
    <property type="match status" value="1"/>
</dbReference>
<protein>
    <recommendedName>
        <fullName>snRNA-activating protein complex subunit 5</fullName>
        <shortName>SNAPc subunit 5</shortName>
    </recommendedName>
    <alternativeName>
        <fullName>Small nuclear RNA-activating complex polypeptide 5</fullName>
    </alternativeName>
</protein>
<keyword id="KW-0539">Nucleus</keyword>
<keyword id="KW-1185">Reference proteome</keyword>
<keyword id="KW-0804">Transcription</keyword>
<keyword id="KW-0805">Transcription regulation</keyword>
<accession>Q29S17</accession>
<name>SNPC5_BOVIN</name>
<comment type="function">
    <text evidence="1">Part of the SNAPc complex required for the transcription of both RNA polymerase II and III small-nuclear RNA genes. Binds to the proximal sequence element (PSE), a non-TATA-box basal promoter element common to these 2 types of genes. Recruits TBP and BRF2 to the U6 snRNA TATA box (By similarity).</text>
</comment>
<comment type="subunit">
    <text evidence="1">Part of the SNAPc complex composed of 5 subunits: SNAPC1, SNAPC2, SNAPC3, SNAPC4 and SNAPC5. SNAPC5 interacts with SNAPC4 (By similarity).</text>
</comment>
<comment type="subcellular location">
    <subcellularLocation>
        <location evidence="1">Nucleus</location>
    </subcellularLocation>
</comment>
<feature type="chain" id="PRO_0000284138" description="snRNA-activating protein complex subunit 5">
    <location>
        <begin position="1"/>
        <end position="98"/>
    </location>
</feature>
<feature type="region of interest" description="Disordered" evidence="2">
    <location>
        <begin position="75"/>
        <end position="98"/>
    </location>
</feature>
<feature type="compositionally biased region" description="Acidic residues" evidence="2">
    <location>
        <begin position="86"/>
        <end position="98"/>
    </location>
</feature>
<reference key="1">
    <citation type="submission" date="2006-02" db="EMBL/GenBank/DDBJ databases">
        <authorList>
            <consortium name="NIH - Mammalian Gene Collection (MGC) project"/>
        </authorList>
    </citation>
    <scope>NUCLEOTIDE SEQUENCE [LARGE SCALE MRNA]</scope>
    <source>
        <strain>Hereford</strain>
        <tissue>Uterus</tissue>
    </source>
</reference>
<proteinExistence type="inferred from homology"/>